<name>FRDD_SALTY</name>
<proteinExistence type="inferred from homology"/>
<protein>
    <recommendedName>
        <fullName evidence="1">Fumarate reductase subunit D</fullName>
    </recommendedName>
    <alternativeName>
        <fullName evidence="1">Fumarate reductase 13 kDa hydrophobic protein</fullName>
    </alternativeName>
    <alternativeName>
        <fullName evidence="1">Quinol-fumarate reductase subunit D</fullName>
        <shortName evidence="1">QFR subunit D</shortName>
    </alternativeName>
</protein>
<feature type="chain" id="PRO_0000196552" description="Fumarate reductase subunit D">
    <location>
        <begin position="1"/>
        <end position="119"/>
    </location>
</feature>
<feature type="transmembrane region" description="Helical" evidence="1">
    <location>
        <begin position="25"/>
        <end position="45"/>
    </location>
</feature>
<feature type="transmembrane region" description="Helical" evidence="1">
    <location>
        <begin position="61"/>
        <end position="81"/>
    </location>
</feature>
<feature type="transmembrane region" description="Helical" evidence="1">
    <location>
        <begin position="99"/>
        <end position="119"/>
    </location>
</feature>
<accession>P67645</accession>
<accession>Q8XFK9</accession>
<gene>
    <name evidence="1" type="primary">frdD</name>
    <name type="ordered locus">STM4340</name>
</gene>
<keyword id="KW-0997">Cell inner membrane</keyword>
<keyword id="KW-1003">Cell membrane</keyword>
<keyword id="KW-0472">Membrane</keyword>
<keyword id="KW-1185">Reference proteome</keyword>
<keyword id="KW-0812">Transmembrane</keyword>
<keyword id="KW-1133">Transmembrane helix</keyword>
<comment type="function">
    <text evidence="1">Two distinct, membrane-bound, FAD-containing enzymes are responsible for the catalysis of fumarate and succinate interconversion; fumarate reductase is used in anaerobic growth, and succinate dehydrogenase is used in aerobic growth. Anchors the catalytic components of the fumarate reductase complex to the cell inner membrane, binds quinones.</text>
</comment>
<comment type="subunit">
    <text evidence="1">Part of an enzyme complex containing four subunits: a flavoprotein (FrdA), an iron-sulfur protein (FrdB), and two hydrophobic anchor proteins (FrdC and FrdD).</text>
</comment>
<comment type="subcellular location">
    <subcellularLocation>
        <location evidence="1">Cell inner membrane</location>
        <topology evidence="1">Multi-pass membrane protein</topology>
    </subcellularLocation>
</comment>
<comment type="similarity">
    <text evidence="1">Belongs to the FrdD family.</text>
</comment>
<evidence type="ECO:0000255" key="1">
    <source>
        <dbReference type="HAMAP-Rule" id="MF_00709"/>
    </source>
</evidence>
<dbReference type="EMBL" id="AE006468">
    <property type="protein sequence ID" value="AAL23163.1"/>
    <property type="molecule type" value="Genomic_DNA"/>
</dbReference>
<dbReference type="RefSeq" id="NP_463204.1">
    <property type="nucleotide sequence ID" value="NC_003197.2"/>
</dbReference>
<dbReference type="RefSeq" id="WP_000609650.1">
    <property type="nucleotide sequence ID" value="NC_003197.2"/>
</dbReference>
<dbReference type="SMR" id="P67645"/>
<dbReference type="STRING" id="99287.STM4340"/>
<dbReference type="PaxDb" id="99287-STM4340"/>
<dbReference type="GeneID" id="1255866"/>
<dbReference type="KEGG" id="stm:STM4340"/>
<dbReference type="PATRIC" id="fig|99287.12.peg.4567"/>
<dbReference type="HOGENOM" id="CLU_168367_0_0_6"/>
<dbReference type="PhylomeDB" id="P67645"/>
<dbReference type="BioCyc" id="SENT99287:STM4340-MONOMER"/>
<dbReference type="Proteomes" id="UP000001014">
    <property type="component" value="Chromosome"/>
</dbReference>
<dbReference type="GO" id="GO:0045283">
    <property type="term" value="C:fumarate reductase complex"/>
    <property type="evidence" value="ECO:0007669"/>
    <property type="project" value="UniProtKB-UniRule"/>
</dbReference>
<dbReference type="GO" id="GO:0005886">
    <property type="term" value="C:plasma membrane"/>
    <property type="evidence" value="ECO:0007669"/>
    <property type="project" value="UniProtKB-SubCell"/>
</dbReference>
<dbReference type="GO" id="GO:0000104">
    <property type="term" value="F:succinate dehydrogenase activity"/>
    <property type="evidence" value="ECO:0007669"/>
    <property type="project" value="UniProtKB-UniRule"/>
</dbReference>
<dbReference type="GO" id="GO:0006106">
    <property type="term" value="P:fumarate metabolic process"/>
    <property type="evidence" value="ECO:0007669"/>
    <property type="project" value="InterPro"/>
</dbReference>
<dbReference type="CDD" id="cd00547">
    <property type="entry name" value="QFR_TypeD_subunitD"/>
    <property type="match status" value="1"/>
</dbReference>
<dbReference type="FunFam" id="1.20.1300.10:FF:000002">
    <property type="entry name" value="Fumarate reductase subunit D"/>
    <property type="match status" value="1"/>
</dbReference>
<dbReference type="Gene3D" id="1.20.1300.10">
    <property type="entry name" value="Fumarate reductase/succinate dehydrogenase, transmembrane subunit"/>
    <property type="match status" value="1"/>
</dbReference>
<dbReference type="HAMAP" id="MF_00709">
    <property type="entry name" value="Fumarate_red_D"/>
    <property type="match status" value="1"/>
</dbReference>
<dbReference type="InterPro" id="IPR003418">
    <property type="entry name" value="Fumarate_red_D"/>
</dbReference>
<dbReference type="InterPro" id="IPR034804">
    <property type="entry name" value="SQR/QFR_C/D"/>
</dbReference>
<dbReference type="NCBIfam" id="NF003977">
    <property type="entry name" value="PRK05470.1-1"/>
    <property type="match status" value="1"/>
</dbReference>
<dbReference type="Pfam" id="PF02313">
    <property type="entry name" value="Fumarate_red_D"/>
    <property type="match status" value="1"/>
</dbReference>
<dbReference type="PIRSF" id="PIRSF000179">
    <property type="entry name" value="FrdD"/>
    <property type="match status" value="1"/>
</dbReference>
<dbReference type="SUPFAM" id="SSF81343">
    <property type="entry name" value="Fumarate reductase respiratory complex transmembrane subunits"/>
    <property type="match status" value="1"/>
</dbReference>
<reference key="1">
    <citation type="journal article" date="2001" name="Nature">
        <title>Complete genome sequence of Salmonella enterica serovar Typhimurium LT2.</title>
        <authorList>
            <person name="McClelland M."/>
            <person name="Sanderson K.E."/>
            <person name="Spieth J."/>
            <person name="Clifton S.W."/>
            <person name="Latreille P."/>
            <person name="Courtney L."/>
            <person name="Porwollik S."/>
            <person name="Ali J."/>
            <person name="Dante M."/>
            <person name="Du F."/>
            <person name="Hou S."/>
            <person name="Layman D."/>
            <person name="Leonard S."/>
            <person name="Nguyen C."/>
            <person name="Scott K."/>
            <person name="Holmes A."/>
            <person name="Grewal N."/>
            <person name="Mulvaney E."/>
            <person name="Ryan E."/>
            <person name="Sun H."/>
            <person name="Florea L."/>
            <person name="Miller W."/>
            <person name="Stoneking T."/>
            <person name="Nhan M."/>
            <person name="Waterston R."/>
            <person name="Wilson R.K."/>
        </authorList>
    </citation>
    <scope>NUCLEOTIDE SEQUENCE [LARGE SCALE GENOMIC DNA]</scope>
    <source>
        <strain>LT2 / SGSC1412 / ATCC 700720</strain>
    </source>
</reference>
<organism>
    <name type="scientific">Salmonella typhimurium (strain LT2 / SGSC1412 / ATCC 700720)</name>
    <dbReference type="NCBI Taxonomy" id="99287"/>
    <lineage>
        <taxon>Bacteria</taxon>
        <taxon>Pseudomonadati</taxon>
        <taxon>Pseudomonadota</taxon>
        <taxon>Gammaproteobacteria</taxon>
        <taxon>Enterobacterales</taxon>
        <taxon>Enterobacteriaceae</taxon>
        <taxon>Salmonella</taxon>
    </lineage>
</organism>
<sequence>MINPNPKRSDEPVFWGLFGAGGMWGAIIAPVIVLLVGIMLPLGLFPGDALSFERVLTFAQSFIGRVFLFLMIVLPLWCGLHRMHHAMHDLKIHVPAGKWVFYGLAAILTVVTAIGVITL</sequence>